<accession>P17809</accession>
<accession>Q61608</accession>
<accession>Q6GTI3</accession>
<protein>
    <recommendedName>
        <fullName evidence="17">Solute carrier family 2, facilitated glucose transporter member 1</fullName>
    </recommendedName>
    <alternativeName>
        <fullName evidence="16">Glucose transporter type 1, erythrocyte/brain</fullName>
        <shortName evidence="16">GLUT-1</shortName>
        <shortName evidence="16">GT1</shortName>
    </alternativeName>
</protein>
<gene>
    <name evidence="18" type="primary">Slc2a1</name>
    <name evidence="16" type="synonym">Glut1</name>
</gene>
<reference key="1">
    <citation type="journal article" date="1989" name="Proc. Natl. Acad. Sci. U.S.A.">
        <title>Sequence, tissue distribution, and differential expression of mRNA for a putative insulin-responsive glucose transporter in mouse 3T3-L1 adipocytes.</title>
        <authorList>
            <person name="Kaestner K.H."/>
            <person name="Christy R.J."/>
            <person name="McLenithan J.C."/>
            <person name="Braiterman L.T."/>
            <person name="Cornelius P."/>
            <person name="Pekala P.H."/>
            <person name="Lane M.D."/>
        </authorList>
    </citation>
    <scope>NUCLEOTIDE SEQUENCE [MRNA]</scope>
    <source>
        <tissue>Brain</tissue>
    </source>
</reference>
<reference key="2">
    <citation type="journal article" date="1990" name="Arch. Biochem. Biophys.">
        <title>3T3-L1 adipocyte glucose transporter (HepG2 class): sequence and regulation of protein and mRNA expression by insulin, differentiation, and glucose starvation.</title>
        <authorList>
            <person name="Reed B.C."/>
            <person name="Shade D."/>
            <person name="Alperovich F."/>
            <person name="Vang M."/>
        </authorList>
    </citation>
    <scope>NUCLEOTIDE SEQUENCE [MRNA]</scope>
</reference>
<reference key="3">
    <citation type="journal article" date="2005" name="Science">
        <title>The transcriptional landscape of the mammalian genome.</title>
        <authorList>
            <person name="Carninci P."/>
            <person name="Kasukawa T."/>
            <person name="Katayama S."/>
            <person name="Gough J."/>
            <person name="Frith M.C."/>
            <person name="Maeda N."/>
            <person name="Oyama R."/>
            <person name="Ravasi T."/>
            <person name="Lenhard B."/>
            <person name="Wells C."/>
            <person name="Kodzius R."/>
            <person name="Shimokawa K."/>
            <person name="Bajic V.B."/>
            <person name="Brenner S.E."/>
            <person name="Batalov S."/>
            <person name="Forrest A.R."/>
            <person name="Zavolan M."/>
            <person name="Davis M.J."/>
            <person name="Wilming L.G."/>
            <person name="Aidinis V."/>
            <person name="Allen J.E."/>
            <person name="Ambesi-Impiombato A."/>
            <person name="Apweiler R."/>
            <person name="Aturaliya R.N."/>
            <person name="Bailey T.L."/>
            <person name="Bansal M."/>
            <person name="Baxter L."/>
            <person name="Beisel K.W."/>
            <person name="Bersano T."/>
            <person name="Bono H."/>
            <person name="Chalk A.M."/>
            <person name="Chiu K.P."/>
            <person name="Choudhary V."/>
            <person name="Christoffels A."/>
            <person name="Clutterbuck D.R."/>
            <person name="Crowe M.L."/>
            <person name="Dalla E."/>
            <person name="Dalrymple B.P."/>
            <person name="de Bono B."/>
            <person name="Della Gatta G."/>
            <person name="di Bernardo D."/>
            <person name="Down T."/>
            <person name="Engstrom P."/>
            <person name="Fagiolini M."/>
            <person name="Faulkner G."/>
            <person name="Fletcher C.F."/>
            <person name="Fukushima T."/>
            <person name="Furuno M."/>
            <person name="Futaki S."/>
            <person name="Gariboldi M."/>
            <person name="Georgii-Hemming P."/>
            <person name="Gingeras T.R."/>
            <person name="Gojobori T."/>
            <person name="Green R.E."/>
            <person name="Gustincich S."/>
            <person name="Harbers M."/>
            <person name="Hayashi Y."/>
            <person name="Hensch T.K."/>
            <person name="Hirokawa N."/>
            <person name="Hill D."/>
            <person name="Huminiecki L."/>
            <person name="Iacono M."/>
            <person name="Ikeo K."/>
            <person name="Iwama A."/>
            <person name="Ishikawa T."/>
            <person name="Jakt M."/>
            <person name="Kanapin A."/>
            <person name="Katoh M."/>
            <person name="Kawasawa Y."/>
            <person name="Kelso J."/>
            <person name="Kitamura H."/>
            <person name="Kitano H."/>
            <person name="Kollias G."/>
            <person name="Krishnan S.P."/>
            <person name="Kruger A."/>
            <person name="Kummerfeld S.K."/>
            <person name="Kurochkin I.V."/>
            <person name="Lareau L.F."/>
            <person name="Lazarevic D."/>
            <person name="Lipovich L."/>
            <person name="Liu J."/>
            <person name="Liuni S."/>
            <person name="McWilliam S."/>
            <person name="Madan Babu M."/>
            <person name="Madera M."/>
            <person name="Marchionni L."/>
            <person name="Matsuda H."/>
            <person name="Matsuzawa S."/>
            <person name="Miki H."/>
            <person name="Mignone F."/>
            <person name="Miyake S."/>
            <person name="Morris K."/>
            <person name="Mottagui-Tabar S."/>
            <person name="Mulder N."/>
            <person name="Nakano N."/>
            <person name="Nakauchi H."/>
            <person name="Ng P."/>
            <person name="Nilsson R."/>
            <person name="Nishiguchi S."/>
            <person name="Nishikawa S."/>
            <person name="Nori F."/>
            <person name="Ohara O."/>
            <person name="Okazaki Y."/>
            <person name="Orlando V."/>
            <person name="Pang K.C."/>
            <person name="Pavan W.J."/>
            <person name="Pavesi G."/>
            <person name="Pesole G."/>
            <person name="Petrovsky N."/>
            <person name="Piazza S."/>
            <person name="Reed J."/>
            <person name="Reid J.F."/>
            <person name="Ring B.Z."/>
            <person name="Ringwald M."/>
            <person name="Rost B."/>
            <person name="Ruan Y."/>
            <person name="Salzberg S.L."/>
            <person name="Sandelin A."/>
            <person name="Schneider C."/>
            <person name="Schoenbach C."/>
            <person name="Sekiguchi K."/>
            <person name="Semple C.A."/>
            <person name="Seno S."/>
            <person name="Sessa L."/>
            <person name="Sheng Y."/>
            <person name="Shibata Y."/>
            <person name="Shimada H."/>
            <person name="Shimada K."/>
            <person name="Silva D."/>
            <person name="Sinclair B."/>
            <person name="Sperling S."/>
            <person name="Stupka E."/>
            <person name="Sugiura K."/>
            <person name="Sultana R."/>
            <person name="Takenaka Y."/>
            <person name="Taki K."/>
            <person name="Tammoja K."/>
            <person name="Tan S.L."/>
            <person name="Tang S."/>
            <person name="Taylor M.S."/>
            <person name="Tegner J."/>
            <person name="Teichmann S.A."/>
            <person name="Ueda H.R."/>
            <person name="van Nimwegen E."/>
            <person name="Verardo R."/>
            <person name="Wei C.L."/>
            <person name="Yagi K."/>
            <person name="Yamanishi H."/>
            <person name="Zabarovsky E."/>
            <person name="Zhu S."/>
            <person name="Zimmer A."/>
            <person name="Hide W."/>
            <person name="Bult C."/>
            <person name="Grimmond S.M."/>
            <person name="Teasdale R.D."/>
            <person name="Liu E.T."/>
            <person name="Brusic V."/>
            <person name="Quackenbush J."/>
            <person name="Wahlestedt C."/>
            <person name="Mattick J.S."/>
            <person name="Hume D.A."/>
            <person name="Kai C."/>
            <person name="Sasaki D."/>
            <person name="Tomaru Y."/>
            <person name="Fukuda S."/>
            <person name="Kanamori-Katayama M."/>
            <person name="Suzuki M."/>
            <person name="Aoki J."/>
            <person name="Arakawa T."/>
            <person name="Iida J."/>
            <person name="Imamura K."/>
            <person name="Itoh M."/>
            <person name="Kato T."/>
            <person name="Kawaji H."/>
            <person name="Kawagashira N."/>
            <person name="Kawashima T."/>
            <person name="Kojima M."/>
            <person name="Kondo S."/>
            <person name="Konno H."/>
            <person name="Nakano K."/>
            <person name="Ninomiya N."/>
            <person name="Nishio T."/>
            <person name="Okada M."/>
            <person name="Plessy C."/>
            <person name="Shibata K."/>
            <person name="Shiraki T."/>
            <person name="Suzuki S."/>
            <person name="Tagami M."/>
            <person name="Waki K."/>
            <person name="Watahiki A."/>
            <person name="Okamura-Oho Y."/>
            <person name="Suzuki H."/>
            <person name="Kawai J."/>
            <person name="Hayashizaki Y."/>
        </authorList>
    </citation>
    <scope>NUCLEOTIDE SEQUENCE [LARGE SCALE MRNA]</scope>
    <source>
        <strain>NOD</strain>
    </source>
</reference>
<reference key="4">
    <citation type="journal article" date="2009" name="PLoS Biol.">
        <title>Lineage-specific biology revealed by a finished genome assembly of the mouse.</title>
        <authorList>
            <person name="Church D.M."/>
            <person name="Goodstadt L."/>
            <person name="Hillier L.W."/>
            <person name="Zody M.C."/>
            <person name="Goldstein S."/>
            <person name="She X."/>
            <person name="Bult C.J."/>
            <person name="Agarwala R."/>
            <person name="Cherry J.L."/>
            <person name="DiCuccio M."/>
            <person name="Hlavina W."/>
            <person name="Kapustin Y."/>
            <person name="Meric P."/>
            <person name="Maglott D."/>
            <person name="Birtle Z."/>
            <person name="Marques A.C."/>
            <person name="Graves T."/>
            <person name="Zhou S."/>
            <person name="Teague B."/>
            <person name="Potamousis K."/>
            <person name="Churas C."/>
            <person name="Place M."/>
            <person name="Herschleb J."/>
            <person name="Runnheim R."/>
            <person name="Forrest D."/>
            <person name="Amos-Landgraf J."/>
            <person name="Schwartz D.C."/>
            <person name="Cheng Z."/>
            <person name="Lindblad-Toh K."/>
            <person name="Eichler E.E."/>
            <person name="Ponting C.P."/>
        </authorList>
    </citation>
    <scope>NUCLEOTIDE SEQUENCE [LARGE SCALE GENOMIC DNA]</scope>
    <source>
        <strain>C57BL/6J</strain>
    </source>
</reference>
<reference key="5">
    <citation type="submission" date="2005-09" db="EMBL/GenBank/DDBJ databases">
        <authorList>
            <person name="Mural R.J."/>
            <person name="Adams M.D."/>
            <person name="Myers E.W."/>
            <person name="Smith H.O."/>
            <person name="Venter J.C."/>
        </authorList>
    </citation>
    <scope>NUCLEOTIDE SEQUENCE [LARGE SCALE GENOMIC DNA]</scope>
</reference>
<reference key="6">
    <citation type="journal article" date="2004" name="Genome Res.">
        <title>The status, quality, and expansion of the NIH full-length cDNA project: the Mammalian Gene Collection (MGC).</title>
        <authorList>
            <consortium name="The MGC Project Team"/>
        </authorList>
    </citation>
    <scope>NUCLEOTIDE SEQUENCE [LARGE SCALE MRNA]</scope>
    <source>
        <strain>C57BL/6J</strain>
        <tissue>Brain</tissue>
    </source>
</reference>
<reference key="7">
    <citation type="journal article" date="1992" name="J. Biol. Chem.">
        <title>Identification of two enhancer elements in the gene encoding the type 1 glucose transporter from the mouse which are responsive to serum, growth factor, and oncogenes.</title>
        <authorList>
            <person name="Murakami T."/>
            <person name="Nishiyama T."/>
            <person name="Shirotani T."/>
            <person name="Shinohara Y."/>
            <person name="Kan M."/>
            <person name="Ishii K."/>
            <person name="Kanai F."/>
            <person name="Nakazuru S."/>
            <person name="Ebina Y."/>
        </authorList>
    </citation>
    <scope>NUCLEOTIDE SEQUENCE [MRNA] OF 1-6</scope>
</reference>
<reference key="8">
    <citation type="journal article" date="1992" name="Development">
        <title>Differential screening of a PCR-generated mouse embryo cDNA library: glucose transporters are differentially expressed in early postimplantation mouse embryos.</title>
        <authorList>
            <person name="Smith D.E."/>
            <person name="Gridley T."/>
        </authorList>
    </citation>
    <scope>NUCLEOTIDE SEQUENCE [MRNA] OF 151-237</scope>
    <scope>DEVELOPMENTAL STAGE</scope>
    <source>
        <strain>C57BL/6J</strain>
        <tissue>Embryo</tissue>
    </source>
</reference>
<reference key="9">
    <citation type="journal article" date="1991" name="Development">
        <title>Glucose transporter gene expression in early mouse embryos.</title>
        <authorList>
            <person name="Hogan A."/>
            <person name="Heyner S."/>
            <person name="Charron M.J."/>
            <person name="Copeland N.G."/>
            <person name="Gilbert D.J."/>
            <person name="Jenkins N.A."/>
            <person name="Thorens B."/>
            <person name="Schultz G.A."/>
        </authorList>
    </citation>
    <scope>NUCLEOTIDE SEQUENCE [MRNA] OF 357-463</scope>
    <scope>DEVELOPMENTAL STAGE</scope>
    <source>
        <strain>CD-1</strain>
        <tissue>Embryo</tissue>
    </source>
</reference>
<reference key="10">
    <citation type="journal article" date="2003" name="Am. J. Pathol.">
        <title>Implications of glucose transporter protein type 1 (GLUT1)-haplodeficiency in embryonic stem cells for their survival in response to hypoxic stress.</title>
        <authorList>
            <person name="Heilig C."/>
            <person name="Brosius F."/>
            <person name="Siu B."/>
            <person name="Concepcion L."/>
            <person name="Mortensen R."/>
            <person name="Heilig K."/>
            <person name="Zhu M."/>
            <person name="Weldon R."/>
            <person name="Wu G."/>
            <person name="Conner D."/>
        </authorList>
    </citation>
    <scope>DISRUPTION PHENOTYPE</scope>
</reference>
<reference key="11">
    <citation type="journal article" date="2007" name="Biochem. Biophys. Res. Commun.">
        <title>PACSIN3 overexpression increases adipocyte glucose transport through GLUT1.</title>
        <authorList>
            <person name="Roach W."/>
            <person name="Plomann M."/>
        </authorList>
    </citation>
    <scope>FUNCTION</scope>
    <scope>SUBCELLULAR LOCATION</scope>
</reference>
<reference key="12">
    <citation type="journal article" date="2009" name="Mol. Cell. Proteomics">
        <title>The mouse C2C12 myoblast cell surface N-linked glycoproteome: identification, glycosite occupancy, and membrane orientation.</title>
        <authorList>
            <person name="Gundry R.L."/>
            <person name="Raginski K."/>
            <person name="Tarasova Y."/>
            <person name="Tchernyshyov I."/>
            <person name="Bausch-Fluck D."/>
            <person name="Elliott S.T."/>
            <person name="Boheler K.R."/>
            <person name="Van Eyk J.E."/>
            <person name="Wollscheid B."/>
        </authorList>
    </citation>
    <scope>GLYCOSYLATION [LARGE SCALE ANALYSIS] AT ASN-45</scope>
    <source>
        <tissue>Myoblast</tissue>
    </source>
</reference>
<reference key="13">
    <citation type="journal article" date="2009" name="Nat. Biotechnol.">
        <title>Mass-spectrometric identification and relative quantification of N-linked cell surface glycoproteins.</title>
        <authorList>
            <person name="Wollscheid B."/>
            <person name="Bausch-Fluck D."/>
            <person name="Henderson C."/>
            <person name="O'Brien R."/>
            <person name="Bibel M."/>
            <person name="Schiess R."/>
            <person name="Aebersold R."/>
            <person name="Watts J.D."/>
        </authorList>
    </citation>
    <scope>GLYCOSYLATION [LARGE SCALE ANALYSIS] AT ASN-45</scope>
</reference>
<reference key="14">
    <citation type="journal article" date="2010" name="Cell">
        <title>A tissue-specific atlas of mouse protein phosphorylation and expression.</title>
        <authorList>
            <person name="Huttlin E.L."/>
            <person name="Jedrychowski M.P."/>
            <person name="Elias J.E."/>
            <person name="Goswami T."/>
            <person name="Rad R."/>
            <person name="Beausoleil S.A."/>
            <person name="Villen J."/>
            <person name="Haas W."/>
            <person name="Sowa M.E."/>
            <person name="Gygi S.P."/>
        </authorList>
    </citation>
    <scope>IDENTIFICATION BY MASS SPECTROMETRY [LARGE SCALE ANALYSIS]</scope>
    <source>
        <tissue>Brain</tissue>
        <tissue>Kidney</tissue>
        <tissue>Lung</tissue>
    </source>
</reference>
<reference key="15">
    <citation type="journal article" date="2015" name="Cell">
        <title>Rod-derived cone viability factor promotes cone survival by stimulating aerobic glycolysis.</title>
        <authorList>
            <person name="Ait-Ali N."/>
            <person name="Fridlich R."/>
            <person name="Millet-Puel G."/>
            <person name="Clerin E."/>
            <person name="Delalande F."/>
            <person name="Jaillard C."/>
            <person name="Blond F."/>
            <person name="Perrocheau L."/>
            <person name="Reichman S."/>
            <person name="Byrne L.C."/>
            <person name="Olivier-Bandini A."/>
            <person name="Bellalou J."/>
            <person name="Moyse E."/>
            <person name="Bouillaud F."/>
            <person name="Nicol X."/>
            <person name="Dalkara D."/>
            <person name="van Dorsselaer A."/>
            <person name="Sahel J.A."/>
            <person name="Leveillard T."/>
        </authorList>
    </citation>
    <scope>SUBCELLULAR LOCATION</scope>
    <scope>TISSUE SPECIFICITY</scope>
</reference>
<reference key="16">
    <citation type="journal article" date="2018" name="Cell">
        <title>Mutations in disordered regions can cause disease by creating dileucine motifs.</title>
        <authorList>
            <person name="Meyer K."/>
            <person name="Kirchner M."/>
            <person name="Uyar B."/>
            <person name="Cheng J.Y."/>
            <person name="Russo G."/>
            <person name="Hernandez-Miranda L.R."/>
            <person name="Szymborska A."/>
            <person name="Zauber H."/>
            <person name="Rudolph I.M."/>
            <person name="Willnow T.E."/>
            <person name="Akalin A."/>
            <person name="Haucke V."/>
            <person name="Gerhardt H."/>
            <person name="Birchmeier C."/>
            <person name="Kuehn R."/>
            <person name="Krauss M."/>
            <person name="Diecke S."/>
            <person name="Pascual J.M."/>
            <person name="Selbach M."/>
        </authorList>
    </citation>
    <scope>SUBCELLULAR LOCATION</scope>
    <scope>MUTAGENESIS OF PRO-485</scope>
</reference>
<reference key="17">
    <citation type="journal article" date="2022" name="Nat. Commun.">
        <title>A Nodal enhanced micropeptide NEMEP regulates glucose uptake during mesendoderm differentiation of embryonic stem cells.</title>
        <authorList>
            <person name="Fu H."/>
            <person name="Wang T."/>
            <person name="Kong X."/>
            <person name="Yan K."/>
            <person name="Yang Y."/>
            <person name="Cao J."/>
            <person name="Yuan Y."/>
            <person name="Wang N."/>
            <person name="Kee K."/>
            <person name="Lu Z.J."/>
            <person name="Xi Q."/>
        </authorList>
    </citation>
    <scope>FUNCTION</scope>
    <scope>INTERACTION WITH SMIM43</scope>
    <scope>SUBCELLULAR LOCATION</scope>
</reference>
<name>GTR1_MOUSE</name>
<comment type="function">
    <text evidence="1 4 9 13 15">Facilitative glucose transporter, which is responsible for constitutive or basal glucose uptake (PubMed:17320047, PubMed:35810171). Has a very broad substrate specificity; can transport a wide range of aldoses including both pentoses and hexoses (By similarity). Most important energy carrier of the brain: present at the blood-brain barrier and assures the energy-independent, facilitative transport of glucose into the brain (By similarity). In association with BSG and NXNL1, promotes retinal cone survival by increasing glucose uptake into photoreceptors (By similarity). Required for mesendoderm differentiation (PubMed:35810171).</text>
</comment>
<comment type="catalytic activity">
    <reaction evidence="1">
        <text>D-glucose(out) = D-glucose(in)</text>
        <dbReference type="Rhea" id="RHEA:60376"/>
        <dbReference type="ChEBI" id="CHEBI:4167"/>
    </reaction>
</comment>
<comment type="activity regulation">
    <text evidence="1">The uptake of glucose is inhibited by cytochalasin B. Glucose uptake is increased in response to phorbol ester 12-O-tetradecanoylphorbol-13-acetate (TPA) treatment: TPA-induced glucose uptake requires phosphorylation at Ser-226.</text>
</comment>
<comment type="subunit">
    <text evidence="1 2 15">Found in a complex with ADD2, DMTN and SLC2A1. Interacts (via C-terminus cytoplasmic region) with DMTN isoform 2. Interacts with SNX27; the interaction is required when endocytosed to prevent degradation in lysosomes and promote recycling to the plasma membrane. Interacts with GIPC (via PDZ domain). Interacts with STOM. Interacts with SGTA (via Gln-rich region) (By similarity). Interacts with isoform 1 of BSG (By similarity). Interacts with SMIM43; the interaction may promote SLC2A1-mediated glucose transport to meet the energy needs of mesendoderm differentiation (PubMed:35810171).</text>
</comment>
<comment type="interaction">
    <interactant intactId="EBI-646060">
        <id>P17809</id>
    </interactant>
    <interactant intactId="EBI-46438951">
        <id>A0A286YD83</id>
        <label>Smim43</label>
    </interactant>
    <organismsDiffer>false</organismsDiffer>
    <experiments>5</experiments>
</comment>
<comment type="subcellular location">
    <subcellularLocation>
        <location evidence="9 14 15">Cell membrane</location>
        <topology evidence="5">Multi-pass membrane protein</topology>
    </subcellularLocation>
    <subcellularLocation>
        <location evidence="13">Photoreceptor inner segment</location>
    </subcellularLocation>
</comment>
<comment type="tissue specificity">
    <text evidence="13">Retina (at protein level).</text>
</comment>
<comment type="developmental stage">
    <text evidence="7 10">Levels decline 3-fold between days 7.5 and 12.5 of gestation. At 7.5 dpc, expressed more strongly in extraembryonic tissues than in the embryo proper. Expressed in amnion, chorion, and ectoplacental cone. In the yolk sac, expressed more strongly in the mesoderm layer than the ectoderm. Expression fairly widespread in the embryo at 8.5 dpc, but by 10.5 dpc, expression is down-regulated and observed in the eye and the spinal cord.</text>
</comment>
<comment type="PTM">
    <text evidence="1">Phosphorylation at Ser-226 by PKC promotes glucose uptake by increasing cell membrane localization.</text>
</comment>
<comment type="disruption phenotype">
    <text evidence="8">Early embryonic lethality.</text>
</comment>
<comment type="similarity">
    <text evidence="17">Belongs to the major facilitator superfamily. Sugar transporter (TC 2.A.1.1) family. Glucose transporter subfamily.</text>
</comment>
<feature type="chain" id="PRO_0000050339" description="Solute carrier family 2, facilitated glucose transporter member 1">
    <location>
        <begin position="1"/>
        <end position="492"/>
    </location>
</feature>
<feature type="topological domain" description="Cytoplasmic" evidence="1">
    <location>
        <begin position="1"/>
        <end position="11"/>
    </location>
</feature>
<feature type="transmembrane region" description="Helical; Name=1" evidence="1">
    <location>
        <begin position="12"/>
        <end position="33"/>
    </location>
</feature>
<feature type="topological domain" description="Extracellular" evidence="1">
    <location>
        <begin position="34"/>
        <end position="66"/>
    </location>
</feature>
<feature type="transmembrane region" description="Helical; Name=2" evidence="1">
    <location>
        <begin position="67"/>
        <end position="87"/>
    </location>
</feature>
<feature type="topological domain" description="Cytoplasmic" evidence="1">
    <location>
        <begin position="88"/>
        <end position="90"/>
    </location>
</feature>
<feature type="transmembrane region" description="Helical; Name=3" evidence="1">
    <location>
        <begin position="91"/>
        <end position="112"/>
    </location>
</feature>
<feature type="topological domain" description="Extracellular" evidence="1">
    <location>
        <begin position="113"/>
        <end position="120"/>
    </location>
</feature>
<feature type="transmembrane region" description="Helical; Name=4" evidence="1">
    <location>
        <begin position="121"/>
        <end position="144"/>
    </location>
</feature>
<feature type="topological domain" description="Cytoplasmic" evidence="1">
    <location>
        <begin position="145"/>
        <end position="155"/>
    </location>
</feature>
<feature type="transmembrane region" description="Helical; Name=5" evidence="1">
    <location>
        <begin position="156"/>
        <end position="176"/>
    </location>
</feature>
<feature type="topological domain" description="Extracellular" evidence="1">
    <location>
        <begin position="177"/>
        <end position="185"/>
    </location>
</feature>
<feature type="transmembrane region" description="Helical; Name=6" evidence="1">
    <location>
        <begin position="186"/>
        <end position="206"/>
    </location>
</feature>
<feature type="topological domain" description="Cytoplasmic" evidence="1">
    <location>
        <begin position="207"/>
        <end position="271"/>
    </location>
</feature>
<feature type="transmembrane region" description="Helical; Name=7" evidence="1">
    <location>
        <begin position="272"/>
        <end position="293"/>
    </location>
</feature>
<feature type="topological domain" description="Extracellular" evidence="1">
    <location>
        <begin position="294"/>
        <end position="306"/>
    </location>
</feature>
<feature type="transmembrane region" description="Helical; Name=8" evidence="1">
    <location>
        <begin position="307"/>
        <end position="328"/>
    </location>
</feature>
<feature type="topological domain" description="Cytoplasmic" evidence="1">
    <location>
        <begin position="329"/>
        <end position="334"/>
    </location>
</feature>
<feature type="transmembrane region" description="Helical; Name=9" evidence="1">
    <location>
        <begin position="335"/>
        <end position="355"/>
    </location>
</feature>
<feature type="topological domain" description="Extracellular" evidence="1">
    <location>
        <begin position="356"/>
        <end position="365"/>
    </location>
</feature>
<feature type="transmembrane region" description="Helical; Name=10" evidence="1">
    <location>
        <begin position="366"/>
        <end position="388"/>
    </location>
</feature>
<feature type="topological domain" description="Cytoplasmic" evidence="1">
    <location>
        <begin position="389"/>
        <end position="401"/>
    </location>
</feature>
<feature type="transmembrane region" description="Helical; Name=11" evidence="1">
    <location>
        <begin position="402"/>
        <end position="422"/>
    </location>
</feature>
<feature type="topological domain" description="Extracellular" evidence="1">
    <location>
        <begin position="423"/>
        <end position="429"/>
    </location>
</feature>
<feature type="transmembrane region" description="Helical; Name=12" evidence="1">
    <location>
        <begin position="430"/>
        <end position="450"/>
    </location>
</feature>
<feature type="topological domain" description="Cytoplasmic" evidence="1">
    <location>
        <begin position="451"/>
        <end position="492"/>
    </location>
</feature>
<feature type="region of interest" description="Disordered" evidence="6">
    <location>
        <begin position="468"/>
        <end position="492"/>
    </location>
</feature>
<feature type="binding site" evidence="3">
    <location>
        <position position="161"/>
    </location>
    <ligand>
        <name>D-glucose</name>
        <dbReference type="ChEBI" id="CHEBI:4167"/>
    </ligand>
</feature>
<feature type="binding site" evidence="3">
    <location>
        <begin position="282"/>
        <end position="283"/>
    </location>
    <ligand>
        <name>D-glucose</name>
        <dbReference type="ChEBI" id="CHEBI:4167"/>
    </ligand>
</feature>
<feature type="binding site" evidence="3">
    <location>
        <position position="288"/>
    </location>
    <ligand>
        <name>D-glucose</name>
        <dbReference type="ChEBI" id="CHEBI:4167"/>
    </ligand>
</feature>
<feature type="binding site" evidence="3">
    <location>
        <position position="317"/>
    </location>
    <ligand>
        <name>D-glucose</name>
        <dbReference type="ChEBI" id="CHEBI:4167"/>
    </ligand>
</feature>
<feature type="binding site" evidence="3">
    <location>
        <position position="380"/>
    </location>
    <ligand>
        <name>D-glucose</name>
        <dbReference type="ChEBI" id="CHEBI:4167"/>
    </ligand>
</feature>
<feature type="binding site" evidence="3">
    <location>
        <position position="388"/>
    </location>
    <ligand>
        <name>D-glucose</name>
        <dbReference type="ChEBI" id="CHEBI:4167"/>
    </ligand>
</feature>
<feature type="modified residue" description="N-acetylmethionine" evidence="1">
    <location>
        <position position="1"/>
    </location>
</feature>
<feature type="modified residue" description="Phosphoserine" evidence="1">
    <location>
        <position position="226"/>
    </location>
</feature>
<feature type="modified residue" description="Phosphoserine" evidence="1">
    <location>
        <position position="465"/>
    </location>
</feature>
<feature type="modified residue" description="Phosphothreonine" evidence="1">
    <location>
        <position position="478"/>
    </location>
</feature>
<feature type="modified residue" description="Phosphoserine" evidence="1">
    <location>
        <position position="490"/>
    </location>
</feature>
<feature type="glycosylation site" description="N-linked (GlcNAc...) asparagine" evidence="11 12">
    <location>
        <position position="45"/>
    </location>
</feature>
<feature type="mutagenesis site" description="Lethality immediately after birth in knockin mice; caused by creation of a dileucine internalization motif that promotes mislocalization of the protein." evidence="14">
    <original>P</original>
    <variation>L</variation>
    <location>
        <position position="485"/>
    </location>
</feature>
<feature type="sequence conflict" description="In Ref. 1; AAA37752." evidence="17" ref="1">
    <original>Y</original>
    <variation>I</variation>
    <location>
        <position position="52"/>
    </location>
</feature>
<feature type="sequence conflict" description="In Ref. 1; AAA37752." evidence="17" ref="1">
    <original>IFI</original>
    <variation>VFV</variation>
    <location>
        <begin position="193"/>
        <end position="195"/>
    </location>
</feature>
<feature type="sequence conflict" description="In Ref. 9; AAB20846." evidence="17" ref="9">
    <original>LLER</original>
    <variation>MQEQ</variation>
    <location>
        <begin position="357"/>
        <end position="360"/>
    </location>
</feature>
<feature type="sequence conflict" description="In Ref. 1; AAA37752." evidence="17" ref="1">
    <original>A</original>
    <variation>R</variation>
    <location>
        <position position="403"/>
    </location>
</feature>
<keyword id="KW-0007">Acetylation</keyword>
<keyword id="KW-1003">Cell membrane</keyword>
<keyword id="KW-0325">Glycoprotein</keyword>
<keyword id="KW-0472">Membrane</keyword>
<keyword id="KW-0597">Phosphoprotein</keyword>
<keyword id="KW-1185">Reference proteome</keyword>
<keyword id="KW-0762">Sugar transport</keyword>
<keyword id="KW-0812">Transmembrane</keyword>
<keyword id="KW-1133">Transmembrane helix</keyword>
<keyword id="KW-0813">Transport</keyword>
<proteinExistence type="evidence at protein level"/>
<organism>
    <name type="scientific">Mus musculus</name>
    <name type="common">Mouse</name>
    <dbReference type="NCBI Taxonomy" id="10090"/>
    <lineage>
        <taxon>Eukaryota</taxon>
        <taxon>Metazoa</taxon>
        <taxon>Chordata</taxon>
        <taxon>Craniata</taxon>
        <taxon>Vertebrata</taxon>
        <taxon>Euteleostomi</taxon>
        <taxon>Mammalia</taxon>
        <taxon>Eutheria</taxon>
        <taxon>Euarchontoglires</taxon>
        <taxon>Glires</taxon>
        <taxon>Rodentia</taxon>
        <taxon>Myomorpha</taxon>
        <taxon>Muroidea</taxon>
        <taxon>Muridae</taxon>
        <taxon>Murinae</taxon>
        <taxon>Mus</taxon>
        <taxon>Mus</taxon>
    </lineage>
</organism>
<evidence type="ECO:0000250" key="1">
    <source>
        <dbReference type="UniProtKB" id="P11166"/>
    </source>
</evidence>
<evidence type="ECO:0000250" key="2">
    <source>
        <dbReference type="UniProtKB" id="P11167"/>
    </source>
</evidence>
<evidence type="ECO:0000250" key="3">
    <source>
        <dbReference type="UniProtKB" id="P11169"/>
    </source>
</evidence>
<evidence type="ECO:0000250" key="4">
    <source>
        <dbReference type="UniProtKB" id="P46896"/>
    </source>
</evidence>
<evidence type="ECO:0000255" key="5"/>
<evidence type="ECO:0000256" key="6">
    <source>
        <dbReference type="SAM" id="MobiDB-lite"/>
    </source>
</evidence>
<evidence type="ECO:0000269" key="7">
    <source>
    </source>
</evidence>
<evidence type="ECO:0000269" key="8">
    <source>
    </source>
</evidence>
<evidence type="ECO:0000269" key="9">
    <source>
    </source>
</evidence>
<evidence type="ECO:0000269" key="10">
    <source>
    </source>
</evidence>
<evidence type="ECO:0000269" key="11">
    <source>
    </source>
</evidence>
<evidence type="ECO:0000269" key="12">
    <source>
    </source>
</evidence>
<evidence type="ECO:0000269" key="13">
    <source>
    </source>
</evidence>
<evidence type="ECO:0000269" key="14">
    <source>
    </source>
</evidence>
<evidence type="ECO:0000269" key="15">
    <source>
    </source>
</evidence>
<evidence type="ECO:0000303" key="16">
    <source>
    </source>
</evidence>
<evidence type="ECO:0000305" key="17"/>
<evidence type="ECO:0000312" key="18">
    <source>
        <dbReference type="MGI" id="MGI:95755"/>
    </source>
</evidence>
<sequence>MDPSSKKVTGRLMLAVGGAVLGSLQFGYNTGVINAPQKVIEEFYNQTWNHRYGEPIPSTTLTTLWSLSVAIFSVGGMIGSFSVGLFVNRFGRRNSMLMMNLLAFVAAVLMGFSKLGKSFEMLILGRFIIGVYCGLTTGFVPMYVGEVSPTALRGALGTLHQLGIVVGILIAQVFGLDSIMGNADLWPLLLSVIFIPALLQCILLPFCPESPRFLLINRNEENRAKSVLKKLRGTADVTRDLQEMKEEGRQMMREKKVTILELFRSPAYRQPILIAVVLQLSQQLSGINAVFYYSTSIFEKAGVQQPVYATIGSGIVNTAFTVVSLFVVERAGRRTLHLIGLAGMAGCAVLMTIALALLERLPWMSYLSIVAIFGFVAFFEVGPGPIPWFIVAELFSQGPRPAAIAVAGFSNWTSNFIVGMCFQYVEQLCGPYVFIIFTVLLVLFFIFTYFKVPETKGRTFDEIASGFRQGGASQSDKTPEELFHPLGADSQV</sequence>
<dbReference type="EMBL" id="M23384">
    <property type="protein sequence ID" value="AAA37752.1"/>
    <property type="molecule type" value="mRNA"/>
</dbReference>
<dbReference type="EMBL" id="M22998">
    <property type="protein sequence ID" value="AAA37707.1"/>
    <property type="molecule type" value="mRNA"/>
</dbReference>
<dbReference type="EMBL" id="AK170873">
    <property type="protein sequence ID" value="BAE42084.1"/>
    <property type="molecule type" value="mRNA"/>
</dbReference>
<dbReference type="EMBL" id="AL606975">
    <property type="status" value="NOT_ANNOTATED_CDS"/>
    <property type="molecule type" value="Genomic_DNA"/>
</dbReference>
<dbReference type="EMBL" id="CH466552">
    <property type="protein sequence ID" value="EDL30474.1"/>
    <property type="molecule type" value="Genomic_DNA"/>
</dbReference>
<dbReference type="EMBL" id="BC055340">
    <property type="protein sequence ID" value="AAH55340.1"/>
    <property type="molecule type" value="mRNA"/>
</dbReference>
<dbReference type="EMBL" id="X69697">
    <property type="protein sequence ID" value="CAA49367.1"/>
    <property type="molecule type" value="mRNA"/>
</dbReference>
<dbReference type="EMBL" id="S77924">
    <property type="protein sequence ID" value="AAB20846.2"/>
    <property type="molecule type" value="mRNA"/>
</dbReference>
<dbReference type="CCDS" id="CCDS18569.1"/>
<dbReference type="PIR" id="A44887">
    <property type="entry name" value="A44887"/>
</dbReference>
<dbReference type="PIR" id="S09705">
    <property type="entry name" value="S09705"/>
</dbReference>
<dbReference type="RefSeq" id="NP_035530.2">
    <property type="nucleotide sequence ID" value="NM_011400.4"/>
</dbReference>
<dbReference type="SMR" id="P17809"/>
<dbReference type="BioGRID" id="203304">
    <property type="interactions" value="14"/>
</dbReference>
<dbReference type="ComplexPortal" id="CPX-3112">
    <property type="entry name" value="Glucose transporter complex 1"/>
</dbReference>
<dbReference type="FunCoup" id="P17809">
    <property type="interactions" value="658"/>
</dbReference>
<dbReference type="IntAct" id="P17809">
    <property type="interactions" value="3"/>
</dbReference>
<dbReference type="MINT" id="P17809"/>
<dbReference type="STRING" id="10090.ENSMUSP00000030398"/>
<dbReference type="GlyCosmos" id="P17809">
    <property type="glycosylation" value="1 site, No reported glycans"/>
</dbReference>
<dbReference type="GlyGen" id="P17809">
    <property type="glycosylation" value="2 sites, 1 O-linked glycan (1 site)"/>
</dbReference>
<dbReference type="iPTMnet" id="P17809"/>
<dbReference type="MetOSite" id="P17809"/>
<dbReference type="PhosphoSitePlus" id="P17809"/>
<dbReference type="SwissPalm" id="P17809"/>
<dbReference type="jPOST" id="P17809"/>
<dbReference type="PaxDb" id="10090-ENSMUSP00000030398"/>
<dbReference type="PeptideAtlas" id="P17809"/>
<dbReference type="ProteomicsDB" id="271185"/>
<dbReference type="Pumba" id="P17809"/>
<dbReference type="Antibodypedia" id="3451">
    <property type="antibodies" value="773 antibodies from 47 providers"/>
</dbReference>
<dbReference type="DNASU" id="20525"/>
<dbReference type="Ensembl" id="ENSMUST00000030398.10">
    <property type="protein sequence ID" value="ENSMUSP00000030398.4"/>
    <property type="gene ID" value="ENSMUSG00000028645.12"/>
</dbReference>
<dbReference type="GeneID" id="20525"/>
<dbReference type="KEGG" id="mmu:20525"/>
<dbReference type="UCSC" id="uc008ule.2">
    <property type="organism name" value="mouse"/>
</dbReference>
<dbReference type="AGR" id="MGI:95755"/>
<dbReference type="CTD" id="6513"/>
<dbReference type="MGI" id="MGI:95755">
    <property type="gene designation" value="Slc2a1"/>
</dbReference>
<dbReference type="VEuPathDB" id="HostDB:ENSMUSG00000028645"/>
<dbReference type="eggNOG" id="KOG0569">
    <property type="taxonomic scope" value="Eukaryota"/>
</dbReference>
<dbReference type="GeneTree" id="ENSGT00940000156792"/>
<dbReference type="HOGENOM" id="CLU_001265_30_5_1"/>
<dbReference type="InParanoid" id="P17809"/>
<dbReference type="OMA" id="WAITASF"/>
<dbReference type="OrthoDB" id="4540492at2759"/>
<dbReference type="PhylomeDB" id="P17809"/>
<dbReference type="TreeFam" id="TF313762"/>
<dbReference type="Reactome" id="R-MMU-189200">
    <property type="pathway name" value="Cellular hexose transport"/>
</dbReference>
<dbReference type="Reactome" id="R-MMU-196836">
    <property type="pathway name" value="Vitamin C (ascorbate) metabolism"/>
</dbReference>
<dbReference type="Reactome" id="R-MMU-422356">
    <property type="pathway name" value="Regulation of insulin secretion"/>
</dbReference>
<dbReference type="Reactome" id="R-MMU-5653890">
    <property type="pathway name" value="Lactose synthesis"/>
</dbReference>
<dbReference type="BioGRID-ORCS" id="20525">
    <property type="hits" value="18 hits in 80 CRISPR screens"/>
</dbReference>
<dbReference type="CD-CODE" id="CE726F99">
    <property type="entry name" value="Postsynaptic density"/>
</dbReference>
<dbReference type="ChiTaRS" id="Slc2a1">
    <property type="organism name" value="mouse"/>
</dbReference>
<dbReference type="PRO" id="PR:P17809"/>
<dbReference type="Proteomes" id="UP000000589">
    <property type="component" value="Chromosome 4"/>
</dbReference>
<dbReference type="RNAct" id="P17809">
    <property type="molecule type" value="protein"/>
</dbReference>
<dbReference type="Bgee" id="ENSMUSG00000028645">
    <property type="expression patterns" value="Expressed in iris and 281 other cell types or tissues"/>
</dbReference>
<dbReference type="ExpressionAtlas" id="P17809">
    <property type="expression patterns" value="baseline and differential"/>
</dbReference>
<dbReference type="GO" id="GO:0016324">
    <property type="term" value="C:apical plasma membrane"/>
    <property type="evidence" value="ECO:0000314"/>
    <property type="project" value="ARUK-UCL"/>
</dbReference>
<dbReference type="GO" id="GO:0016323">
    <property type="term" value="C:basolateral plasma membrane"/>
    <property type="evidence" value="ECO:0000314"/>
    <property type="project" value="MGI"/>
</dbReference>
<dbReference type="GO" id="GO:0005901">
    <property type="term" value="C:caveola"/>
    <property type="evidence" value="ECO:0007669"/>
    <property type="project" value="Ensembl"/>
</dbReference>
<dbReference type="GO" id="GO:0030864">
    <property type="term" value="C:cortical actin cytoskeleton"/>
    <property type="evidence" value="ECO:0000250"/>
    <property type="project" value="UniProtKB"/>
</dbReference>
<dbReference type="GO" id="GO:0005737">
    <property type="term" value="C:cytoplasm"/>
    <property type="evidence" value="ECO:0000314"/>
    <property type="project" value="UniProtKB"/>
</dbReference>
<dbReference type="GO" id="GO:0005829">
    <property type="term" value="C:cytosol"/>
    <property type="evidence" value="ECO:0000314"/>
    <property type="project" value="MGI"/>
</dbReference>
<dbReference type="GO" id="GO:0001674">
    <property type="term" value="C:female germ cell nucleus"/>
    <property type="evidence" value="ECO:0000314"/>
    <property type="project" value="MGI"/>
</dbReference>
<dbReference type="GO" id="GO:0001939">
    <property type="term" value="C:female pronucleus"/>
    <property type="evidence" value="ECO:0000314"/>
    <property type="project" value="MGI"/>
</dbReference>
<dbReference type="GO" id="GO:1990350">
    <property type="term" value="C:glucose transporter complex"/>
    <property type="evidence" value="ECO:0000266"/>
    <property type="project" value="ComplexPortal"/>
</dbReference>
<dbReference type="GO" id="GO:0000139">
    <property type="term" value="C:Golgi membrane"/>
    <property type="evidence" value="ECO:0000314"/>
    <property type="project" value="MGI"/>
</dbReference>
<dbReference type="GO" id="GO:0014704">
    <property type="term" value="C:intercalated disc"/>
    <property type="evidence" value="ECO:0007669"/>
    <property type="project" value="Ensembl"/>
</dbReference>
<dbReference type="GO" id="GO:0016020">
    <property type="term" value="C:membrane"/>
    <property type="evidence" value="ECO:0000314"/>
    <property type="project" value="MGI"/>
</dbReference>
<dbReference type="GO" id="GO:0045121">
    <property type="term" value="C:membrane raft"/>
    <property type="evidence" value="ECO:0000314"/>
    <property type="project" value="MGI"/>
</dbReference>
<dbReference type="GO" id="GO:0030496">
    <property type="term" value="C:midbody"/>
    <property type="evidence" value="ECO:0007669"/>
    <property type="project" value="Ensembl"/>
</dbReference>
<dbReference type="GO" id="GO:0001917">
    <property type="term" value="C:photoreceptor inner segment"/>
    <property type="evidence" value="ECO:0000314"/>
    <property type="project" value="UniProtKB"/>
</dbReference>
<dbReference type="GO" id="GO:0005886">
    <property type="term" value="C:plasma membrane"/>
    <property type="evidence" value="ECO:0000314"/>
    <property type="project" value="UniProtKB"/>
</dbReference>
<dbReference type="GO" id="GO:0098793">
    <property type="term" value="C:presynapse"/>
    <property type="evidence" value="ECO:0000314"/>
    <property type="project" value="MGI"/>
</dbReference>
<dbReference type="GO" id="GO:0042383">
    <property type="term" value="C:sarcolemma"/>
    <property type="evidence" value="ECO:0007669"/>
    <property type="project" value="Ensembl"/>
</dbReference>
<dbReference type="GO" id="GO:0045202">
    <property type="term" value="C:synapse"/>
    <property type="evidence" value="ECO:0000314"/>
    <property type="project" value="MGI"/>
</dbReference>
<dbReference type="GO" id="GO:0031982">
    <property type="term" value="C:vesicle"/>
    <property type="evidence" value="ECO:0000314"/>
    <property type="project" value="MGI"/>
</dbReference>
<dbReference type="GO" id="GO:0030018">
    <property type="term" value="C:Z disc"/>
    <property type="evidence" value="ECO:0007669"/>
    <property type="project" value="Ensembl"/>
</dbReference>
<dbReference type="GO" id="GO:0055056">
    <property type="term" value="F:D-glucose transmembrane transporter activity"/>
    <property type="evidence" value="ECO:0000314"/>
    <property type="project" value="UniProtKB"/>
</dbReference>
<dbReference type="GO" id="GO:0033300">
    <property type="term" value="F:dehydroascorbic acid transmembrane transporter activity"/>
    <property type="evidence" value="ECO:0000314"/>
    <property type="project" value="UniProtKB"/>
</dbReference>
<dbReference type="GO" id="GO:0015150">
    <property type="term" value="F:fucose transmembrane transporter activity"/>
    <property type="evidence" value="ECO:0000314"/>
    <property type="project" value="MGI"/>
</dbReference>
<dbReference type="GO" id="GO:0042802">
    <property type="term" value="F:identical protein binding"/>
    <property type="evidence" value="ECO:0007669"/>
    <property type="project" value="Ensembl"/>
</dbReference>
<dbReference type="GO" id="GO:0019900">
    <property type="term" value="F:kinase binding"/>
    <property type="evidence" value="ECO:0007669"/>
    <property type="project" value="Ensembl"/>
</dbReference>
<dbReference type="GO" id="GO:0005324">
    <property type="term" value="F:long-chain fatty acid transmembrane transporter activity"/>
    <property type="evidence" value="ECO:0007669"/>
    <property type="project" value="Ensembl"/>
</dbReference>
<dbReference type="GO" id="GO:0042910">
    <property type="term" value="F:xenobiotic transmembrane transporter activity"/>
    <property type="evidence" value="ECO:0007669"/>
    <property type="project" value="Ensembl"/>
</dbReference>
<dbReference type="GO" id="GO:0071474">
    <property type="term" value="P:cellular hyperosmotic response"/>
    <property type="evidence" value="ECO:0007669"/>
    <property type="project" value="Ensembl"/>
</dbReference>
<dbReference type="GO" id="GO:0042149">
    <property type="term" value="P:cellular response to glucose starvation"/>
    <property type="evidence" value="ECO:0000314"/>
    <property type="project" value="MGI"/>
</dbReference>
<dbReference type="GO" id="GO:0071260">
    <property type="term" value="P:cellular response to mechanical stimulus"/>
    <property type="evidence" value="ECO:0007669"/>
    <property type="project" value="Ensembl"/>
</dbReference>
<dbReference type="GO" id="GO:0021987">
    <property type="term" value="P:cerebral cortex development"/>
    <property type="evidence" value="ECO:0007669"/>
    <property type="project" value="Ensembl"/>
</dbReference>
<dbReference type="GO" id="GO:0046323">
    <property type="term" value="P:D-glucose import"/>
    <property type="evidence" value="ECO:0007669"/>
    <property type="project" value="Ensembl"/>
</dbReference>
<dbReference type="GO" id="GO:0098708">
    <property type="term" value="P:D-glucose import across plasma membrane"/>
    <property type="evidence" value="ECO:0007669"/>
    <property type="project" value="Ensembl"/>
</dbReference>
<dbReference type="GO" id="GO:1904659">
    <property type="term" value="P:D-glucose transmembrane transport"/>
    <property type="evidence" value="ECO:0000314"/>
    <property type="project" value="UniProtKB"/>
</dbReference>
<dbReference type="GO" id="GO:0070837">
    <property type="term" value="P:dehydroascorbic acid transport"/>
    <property type="evidence" value="ECO:0000314"/>
    <property type="project" value="UniProtKB"/>
</dbReference>
<dbReference type="GO" id="GO:0007565">
    <property type="term" value="P:female pregnancy"/>
    <property type="evidence" value="ECO:0007669"/>
    <property type="project" value="Ensembl"/>
</dbReference>
<dbReference type="GO" id="GO:0015911">
    <property type="term" value="P:long-chain fatty acid import across plasma membrane"/>
    <property type="evidence" value="ECO:0007669"/>
    <property type="project" value="Ensembl"/>
</dbReference>
<dbReference type="GO" id="GO:0045494">
    <property type="term" value="P:photoreceptor cell maintenance"/>
    <property type="evidence" value="ECO:0000250"/>
    <property type="project" value="UniProtKB"/>
</dbReference>
<dbReference type="GO" id="GO:0065003">
    <property type="term" value="P:protein-containing complex assembly"/>
    <property type="evidence" value="ECO:0000250"/>
    <property type="project" value="UniProtKB"/>
</dbReference>
<dbReference type="GO" id="GO:0001666">
    <property type="term" value="P:response to hypoxia"/>
    <property type="evidence" value="ECO:0007669"/>
    <property type="project" value="Ensembl"/>
</dbReference>
<dbReference type="GO" id="GO:0032868">
    <property type="term" value="P:response to insulin"/>
    <property type="evidence" value="ECO:0007669"/>
    <property type="project" value="Ensembl"/>
</dbReference>
<dbReference type="GO" id="GO:1904016">
    <property type="term" value="P:response to Thyroglobulin triiodothyronine"/>
    <property type="evidence" value="ECO:0007669"/>
    <property type="project" value="Ensembl"/>
</dbReference>
<dbReference type="GO" id="GO:0150104">
    <property type="term" value="P:transport across blood-brain barrier"/>
    <property type="evidence" value="ECO:0007669"/>
    <property type="project" value="Ensembl"/>
</dbReference>
<dbReference type="CDD" id="cd17431">
    <property type="entry name" value="MFS_GLUT_Class1"/>
    <property type="match status" value="1"/>
</dbReference>
<dbReference type="FunFam" id="1.20.1250.20:FF:000040">
    <property type="entry name" value="Solute carrier family 2, facilitated glucose transporter member 1"/>
    <property type="match status" value="1"/>
</dbReference>
<dbReference type="Gene3D" id="1.20.1250.20">
    <property type="entry name" value="MFS general substrate transporter like domains"/>
    <property type="match status" value="1"/>
</dbReference>
<dbReference type="InterPro" id="IPR002439">
    <property type="entry name" value="Glu_transpt_1"/>
</dbReference>
<dbReference type="InterPro" id="IPR045263">
    <property type="entry name" value="GLUT"/>
</dbReference>
<dbReference type="InterPro" id="IPR020846">
    <property type="entry name" value="MFS_dom"/>
</dbReference>
<dbReference type="InterPro" id="IPR005828">
    <property type="entry name" value="MFS_sugar_transport-like"/>
</dbReference>
<dbReference type="InterPro" id="IPR036259">
    <property type="entry name" value="MFS_trans_sf"/>
</dbReference>
<dbReference type="InterPro" id="IPR003663">
    <property type="entry name" value="Sugar/inositol_transpt"/>
</dbReference>
<dbReference type="InterPro" id="IPR005829">
    <property type="entry name" value="Sugar_transporter_CS"/>
</dbReference>
<dbReference type="NCBIfam" id="TIGR00879">
    <property type="entry name" value="SP"/>
    <property type="match status" value="1"/>
</dbReference>
<dbReference type="PANTHER" id="PTHR23503">
    <property type="entry name" value="SOLUTE CARRIER FAMILY 2"/>
    <property type="match status" value="1"/>
</dbReference>
<dbReference type="PANTHER" id="PTHR23503:SF51">
    <property type="entry name" value="SOLUTE CARRIER FAMILY 2, FACILITATED GLUCOSE TRANSPORTER MEMBER 1"/>
    <property type="match status" value="1"/>
</dbReference>
<dbReference type="Pfam" id="PF00083">
    <property type="entry name" value="Sugar_tr"/>
    <property type="match status" value="1"/>
</dbReference>
<dbReference type="PRINTS" id="PR01190">
    <property type="entry name" value="GLUCTRSPORT1"/>
</dbReference>
<dbReference type="PRINTS" id="PR00171">
    <property type="entry name" value="SUGRTRNSPORT"/>
</dbReference>
<dbReference type="SUPFAM" id="SSF103473">
    <property type="entry name" value="MFS general substrate transporter"/>
    <property type="match status" value="1"/>
</dbReference>
<dbReference type="PROSITE" id="PS50850">
    <property type="entry name" value="MFS"/>
    <property type="match status" value="1"/>
</dbReference>
<dbReference type="PROSITE" id="PS00216">
    <property type="entry name" value="SUGAR_TRANSPORT_1"/>
    <property type="match status" value="1"/>
</dbReference>
<dbReference type="PROSITE" id="PS00217">
    <property type="entry name" value="SUGAR_TRANSPORT_2"/>
    <property type="match status" value="1"/>
</dbReference>